<comment type="catalytic activity">
    <reaction evidence="1">
        <text>2 L-glutamate + NADP(+) = L-glutamine + 2-oxoglutarate + NADPH + H(+)</text>
        <dbReference type="Rhea" id="RHEA:15501"/>
        <dbReference type="ChEBI" id="CHEBI:15378"/>
        <dbReference type="ChEBI" id="CHEBI:16810"/>
        <dbReference type="ChEBI" id="CHEBI:29985"/>
        <dbReference type="ChEBI" id="CHEBI:57783"/>
        <dbReference type="ChEBI" id="CHEBI:58349"/>
        <dbReference type="ChEBI" id="CHEBI:58359"/>
        <dbReference type="EC" id="1.4.1.13"/>
    </reaction>
</comment>
<comment type="cofactor">
    <cofactor evidence="1">
        <name>FMN</name>
        <dbReference type="ChEBI" id="CHEBI:58210"/>
    </cofactor>
</comment>
<comment type="similarity">
    <text evidence="2">Belongs to the glutamate synthase family.</text>
</comment>
<feature type="chain" id="PRO_0000420610" description="Archaeal-type glutamate synthase [NADPH]">
    <location>
        <begin position="1"/>
        <end position="507"/>
    </location>
</feature>
<feature type="domain" description="4Fe-4S ferredoxin-type 1" evidence="3">
    <location>
        <begin position="10"/>
        <end position="39"/>
    </location>
</feature>
<feature type="domain" description="4Fe-4S ferredoxin-type 2" evidence="3">
    <location>
        <begin position="41"/>
        <end position="70"/>
    </location>
</feature>
<feature type="binding site" evidence="1">
    <location>
        <position position="19"/>
    </location>
    <ligand>
        <name>[4Fe-4S] cluster</name>
        <dbReference type="ChEBI" id="CHEBI:49883"/>
        <label>1</label>
    </ligand>
</feature>
<feature type="binding site" evidence="1">
    <location>
        <position position="22"/>
    </location>
    <ligand>
        <name>[4Fe-4S] cluster</name>
        <dbReference type="ChEBI" id="CHEBI:49883"/>
        <label>1</label>
    </ligand>
</feature>
<feature type="binding site" evidence="1">
    <location>
        <position position="25"/>
    </location>
    <ligand>
        <name>[4Fe-4S] cluster</name>
        <dbReference type="ChEBI" id="CHEBI:49883"/>
        <label>1</label>
    </ligand>
</feature>
<feature type="binding site" evidence="1">
    <location>
        <position position="29"/>
    </location>
    <ligand>
        <name>[4Fe-4S] cluster</name>
        <dbReference type="ChEBI" id="CHEBI:49883"/>
        <label>2</label>
    </ligand>
</feature>
<feature type="binding site" evidence="1">
    <location>
        <position position="50"/>
    </location>
    <ligand>
        <name>[4Fe-4S] cluster</name>
        <dbReference type="ChEBI" id="CHEBI:49883"/>
        <label>2</label>
    </ligand>
</feature>
<feature type="binding site" evidence="1">
    <location>
        <position position="53"/>
    </location>
    <ligand>
        <name>[4Fe-4S] cluster</name>
        <dbReference type="ChEBI" id="CHEBI:49883"/>
        <label>2</label>
    </ligand>
</feature>
<feature type="binding site" evidence="1">
    <location>
        <position position="56"/>
    </location>
    <ligand>
        <name>[4Fe-4S] cluster</name>
        <dbReference type="ChEBI" id="CHEBI:49883"/>
        <label>2</label>
    </ligand>
</feature>
<feature type="binding site" evidence="1">
    <location>
        <position position="60"/>
    </location>
    <ligand>
        <name>[4Fe-4S] cluster</name>
        <dbReference type="ChEBI" id="CHEBI:49883"/>
        <label>1</label>
    </ligand>
</feature>
<proteinExistence type="inferred from homology"/>
<name>AGLUS_THENN</name>
<keyword id="KW-0004">4Fe-4S</keyword>
<keyword id="KW-0028">Amino-acid biosynthesis</keyword>
<keyword id="KW-0285">Flavoprotein</keyword>
<keyword id="KW-0288">FMN</keyword>
<keyword id="KW-0314">Glutamate biosynthesis</keyword>
<keyword id="KW-0408">Iron</keyword>
<keyword id="KW-0411">Iron-sulfur</keyword>
<keyword id="KW-0479">Metal-binding</keyword>
<keyword id="KW-0521">NADP</keyword>
<keyword id="KW-0560">Oxidoreductase</keyword>
<keyword id="KW-0677">Repeat</keyword>
<organism>
    <name type="scientific">Thermotoga neapolitana (strain ATCC 49049 / DSM 4359 / NBRC 107923 / NS-E)</name>
    <dbReference type="NCBI Taxonomy" id="309803"/>
    <lineage>
        <taxon>Bacteria</taxon>
        <taxon>Thermotogati</taxon>
        <taxon>Thermotogota</taxon>
        <taxon>Thermotogae</taxon>
        <taxon>Thermotogales</taxon>
        <taxon>Thermotogaceae</taxon>
        <taxon>Thermotoga</taxon>
    </lineage>
</organism>
<gene>
    <name evidence="7" type="primary">gltB</name>
    <name type="ordered locus">CTN_0272</name>
</gene>
<evidence type="ECO:0000250" key="1">
    <source>
        <dbReference type="UniProtKB" id="Q58746"/>
    </source>
</evidence>
<evidence type="ECO:0000255" key="2"/>
<evidence type="ECO:0000255" key="3">
    <source>
        <dbReference type="PROSITE-ProRule" id="PRU00711"/>
    </source>
</evidence>
<evidence type="ECO:0000303" key="4">
    <source>
    </source>
</evidence>
<evidence type="ECO:0000305" key="5"/>
<evidence type="ECO:0000312" key="6">
    <source>
        <dbReference type="EMBL" id="ACM22448.1"/>
    </source>
</evidence>
<evidence type="ECO:0000312" key="7">
    <source>
        <dbReference type="EMBL" id="CAC21395.1"/>
    </source>
</evidence>
<protein>
    <recommendedName>
        <fullName evidence="4 6">Archaeal-type glutamate synthase [NADPH]</fullName>
        <ecNumber evidence="1">1.4.1.13</ecNumber>
    </recommendedName>
    <alternativeName>
        <fullName evidence="1">Archaeal-type NADPH-GOGAT</fullName>
    </alternativeName>
</protein>
<sequence length="507" mass="55120">MAKRKVPAEFVVERDDYKCIRCLACVRVCSYGANYYDENANRVYTENYKCVGCHFCEAICPTEAITVRRNNFDIRPLAHWTPEHLIGIMKQADTGGVLLTSMGNDRPYFSYFDRIVLNASQVTNPSIDPLREPMEIRTYIGRKEAKLEIEEDGEGNVALKTEIAPQLKLEVPVMFTAMSYGSISLNALLSLARAARTIGTFFNTGEGGLPKELREFKDNMIVQVASGRFGVSADYLNAGSAVEIKIGQGAKPGIGGHLPGEKVTEPISETRMIPVGTDALSPAPHHDIYSIEDLRQLIYAIKEATRYEKPVGVKIAAVHNVAPIAAGMVRAGADYIVIDGIRGGTGAAPKVTRDHVGIPIEFAIAVVDQRLREEGIRHMASIVVAGGIRNSADVIKAIALGADAVYIGTAALVALGCHLCQTCYLGKCNWGIATQDPKLTKRLNPEIGARRAANLLRAWAHEIKEILGGMGINAIESLRGNREALRGVGLHEYELKLLGIKPAGEAW</sequence>
<accession>B9KBQ2</accession>
<accession>Q9EVU9</accession>
<dbReference type="EC" id="1.4.1.13" evidence="1"/>
<dbReference type="EMBL" id="CP000916">
    <property type="protein sequence ID" value="ACM22448.1"/>
    <property type="molecule type" value="Genomic_DNA"/>
</dbReference>
<dbReference type="EMBL" id="AJ400998">
    <property type="protein sequence ID" value="CAC21395.1"/>
    <property type="molecule type" value="Genomic_DNA"/>
</dbReference>
<dbReference type="RefSeq" id="WP_015918777.1">
    <property type="nucleotide sequence ID" value="NC_011978.1"/>
</dbReference>
<dbReference type="SMR" id="B9KBQ2"/>
<dbReference type="STRING" id="309803.CTN_0272"/>
<dbReference type="KEGG" id="tna:CTN_0272"/>
<dbReference type="eggNOG" id="COG0069">
    <property type="taxonomic scope" value="Bacteria"/>
</dbReference>
<dbReference type="eggNOG" id="COG1146">
    <property type="taxonomic scope" value="Bacteria"/>
</dbReference>
<dbReference type="HOGENOM" id="CLU_023342_1_1_0"/>
<dbReference type="Proteomes" id="UP000000445">
    <property type="component" value="Chromosome"/>
</dbReference>
<dbReference type="GO" id="GO:0051539">
    <property type="term" value="F:4 iron, 4 sulfur cluster binding"/>
    <property type="evidence" value="ECO:0007669"/>
    <property type="project" value="UniProtKB-KW"/>
</dbReference>
<dbReference type="GO" id="GO:0004355">
    <property type="term" value="F:glutamate synthase (NADPH) activity"/>
    <property type="evidence" value="ECO:0007669"/>
    <property type="project" value="UniProtKB-EC"/>
</dbReference>
<dbReference type="GO" id="GO:0046872">
    <property type="term" value="F:metal ion binding"/>
    <property type="evidence" value="ECO:0007669"/>
    <property type="project" value="UniProtKB-KW"/>
</dbReference>
<dbReference type="GO" id="GO:0006537">
    <property type="term" value="P:glutamate biosynthetic process"/>
    <property type="evidence" value="ECO:0007669"/>
    <property type="project" value="UniProtKB-KW"/>
</dbReference>
<dbReference type="CDD" id="cd02808">
    <property type="entry name" value="GltS_FMN"/>
    <property type="match status" value="1"/>
</dbReference>
<dbReference type="Gene3D" id="3.30.70.20">
    <property type="match status" value="1"/>
</dbReference>
<dbReference type="Gene3D" id="3.20.20.70">
    <property type="entry name" value="Aldolase class I"/>
    <property type="match status" value="1"/>
</dbReference>
<dbReference type="InterPro" id="IPR017896">
    <property type="entry name" value="4Fe4S_Fe-S-bd"/>
</dbReference>
<dbReference type="InterPro" id="IPR017900">
    <property type="entry name" value="4Fe4S_Fe_S_CS"/>
</dbReference>
<dbReference type="InterPro" id="IPR013785">
    <property type="entry name" value="Aldolase_TIM"/>
</dbReference>
<dbReference type="InterPro" id="IPR024188">
    <property type="entry name" value="GltB"/>
</dbReference>
<dbReference type="InterPro" id="IPR043578">
    <property type="entry name" value="GltB_archl_type"/>
</dbReference>
<dbReference type="InterPro" id="IPR002932">
    <property type="entry name" value="Glu_synthdom"/>
</dbReference>
<dbReference type="PANTHER" id="PTHR43819">
    <property type="entry name" value="ARCHAEAL-TYPE GLUTAMATE SYNTHASE [NADPH]"/>
    <property type="match status" value="1"/>
</dbReference>
<dbReference type="PANTHER" id="PTHR43819:SF1">
    <property type="entry name" value="ARCHAEAL-TYPE GLUTAMATE SYNTHASE [NADPH]"/>
    <property type="match status" value="1"/>
</dbReference>
<dbReference type="Pfam" id="PF13237">
    <property type="entry name" value="Fer4_10"/>
    <property type="match status" value="1"/>
</dbReference>
<dbReference type="Pfam" id="PF01645">
    <property type="entry name" value="Glu_synthase"/>
    <property type="match status" value="1"/>
</dbReference>
<dbReference type="PIRSF" id="PIRSF500061">
    <property type="entry name" value="GOGAT_lg2_archl"/>
    <property type="match status" value="1"/>
</dbReference>
<dbReference type="PIRSF" id="PIRSF006429">
    <property type="entry name" value="GOGAT_lg_2"/>
    <property type="match status" value="1"/>
</dbReference>
<dbReference type="SUPFAM" id="SSF54862">
    <property type="entry name" value="4Fe-4S ferredoxins"/>
    <property type="match status" value="1"/>
</dbReference>
<dbReference type="SUPFAM" id="SSF51395">
    <property type="entry name" value="FMN-linked oxidoreductases"/>
    <property type="match status" value="1"/>
</dbReference>
<dbReference type="PROSITE" id="PS00198">
    <property type="entry name" value="4FE4S_FER_1"/>
    <property type="match status" value="1"/>
</dbReference>
<dbReference type="PROSITE" id="PS51379">
    <property type="entry name" value="4FE4S_FER_2"/>
    <property type="match status" value="2"/>
</dbReference>
<reference evidence="6" key="1">
    <citation type="submission" date="2007-11" db="EMBL/GenBank/DDBJ databases">
        <title>The genome sequence of the hyperthermophilic bacterium Thermotoga neapolitana.</title>
        <authorList>
            <person name="Lim S.K."/>
            <person name="Kim J.S."/>
            <person name="Cha S.H."/>
            <person name="Park B.C."/>
            <person name="Lee D.S."/>
            <person name="Tae H.S."/>
            <person name="Kim S.-J."/>
            <person name="Kim J.J."/>
            <person name="Park K.J."/>
            <person name="Lee S.Y."/>
        </authorList>
    </citation>
    <scope>NUCLEOTIDE SEQUENCE [LARGE SCALE GENOMIC DNA]</scope>
    <source>
        <strain>ATCC 49049 / DSM 4359 / NBRC 107923 / NS-E</strain>
    </source>
</reference>
<reference evidence="5 7" key="2">
    <citation type="journal article" date="2001" name="Mol. Biol. Evol.">
        <title>Phylogenetic analyses of two 'archaeal' genes in thermotoga maritima reveal multiple transfers between archaea and bacteria.</title>
        <authorList>
            <person name="Nesbo C.L."/>
            <person name="L'Haridon S."/>
            <person name="Stetter K.O."/>
            <person name="Doolittle W.F."/>
        </authorList>
    </citation>
    <scope>NUCLEOTIDE SEQUENCE [GENOMIC DNA] OF 95-402</scope>
    <scope>PHYLOGENETIC STUDY</scope>
    <source>
        <strain evidence="7">ATCC 49049 / DSM 4359 / NBRC 107923 / NS-E</strain>
    </source>
</reference>